<proteinExistence type="evidence at protein level"/>
<dbReference type="EMBL" id="AY740402">
    <property type="protein sequence ID" value="AAU95600.1"/>
    <property type="molecule type" value="Genomic_DNA"/>
</dbReference>
<dbReference type="RefSeq" id="NP_001008663.1">
    <property type="nucleotide sequence ID" value="NM_001008663.1"/>
</dbReference>
<dbReference type="SMR" id="Q5XQN5"/>
<dbReference type="FunCoup" id="Q5XQN5">
    <property type="interactions" value="150"/>
</dbReference>
<dbReference type="IntAct" id="Q5XQN5">
    <property type="interactions" value="1"/>
</dbReference>
<dbReference type="STRING" id="9913.ENSBTAP00000021456"/>
<dbReference type="PaxDb" id="9913-ENSBTAP00000021456"/>
<dbReference type="PeptideAtlas" id="Q5XQN5"/>
<dbReference type="GeneID" id="281268"/>
<dbReference type="KEGG" id="bta:281268"/>
<dbReference type="CTD" id="3852"/>
<dbReference type="eggNOG" id="ENOG502QURK">
    <property type="taxonomic scope" value="Eukaryota"/>
</dbReference>
<dbReference type="InParanoid" id="Q5XQN5"/>
<dbReference type="OrthoDB" id="2441647at2759"/>
<dbReference type="Proteomes" id="UP000009136">
    <property type="component" value="Unplaced"/>
</dbReference>
<dbReference type="GO" id="GO:0005737">
    <property type="term" value="C:cytoplasm"/>
    <property type="evidence" value="ECO:0000250"/>
    <property type="project" value="UniProtKB"/>
</dbReference>
<dbReference type="GO" id="GO:0045095">
    <property type="term" value="C:keratin filament"/>
    <property type="evidence" value="ECO:0000318"/>
    <property type="project" value="GO_Central"/>
</dbReference>
<dbReference type="GO" id="GO:0030280">
    <property type="term" value="F:structural constituent of skin epidermis"/>
    <property type="evidence" value="ECO:0000318"/>
    <property type="project" value="GO_Central"/>
</dbReference>
<dbReference type="GO" id="GO:0030855">
    <property type="term" value="P:epithelial cell differentiation"/>
    <property type="evidence" value="ECO:0000250"/>
    <property type="project" value="UniProtKB"/>
</dbReference>
<dbReference type="GO" id="GO:0045109">
    <property type="term" value="P:intermediate filament organization"/>
    <property type="evidence" value="ECO:0000318"/>
    <property type="project" value="GO_Central"/>
</dbReference>
<dbReference type="GO" id="GO:0045107">
    <property type="term" value="P:intermediate filament polymerization"/>
    <property type="evidence" value="ECO:0000250"/>
    <property type="project" value="UniProtKB"/>
</dbReference>
<dbReference type="GO" id="GO:0031424">
    <property type="term" value="P:keratinization"/>
    <property type="evidence" value="ECO:0000318"/>
    <property type="project" value="GO_Central"/>
</dbReference>
<dbReference type="GO" id="GO:0050680">
    <property type="term" value="P:negative regulation of epithelial cell proliferation"/>
    <property type="evidence" value="ECO:0000250"/>
    <property type="project" value="UniProtKB"/>
</dbReference>
<dbReference type="GO" id="GO:0030334">
    <property type="term" value="P:regulation of cell migration"/>
    <property type="evidence" value="ECO:0000250"/>
    <property type="project" value="UniProtKB"/>
</dbReference>
<dbReference type="GO" id="GO:0032880">
    <property type="term" value="P:regulation of protein localization"/>
    <property type="evidence" value="ECO:0000250"/>
    <property type="project" value="UniProtKB"/>
</dbReference>
<dbReference type="GO" id="GO:0009612">
    <property type="term" value="P:response to mechanical stimulus"/>
    <property type="evidence" value="ECO:0000250"/>
    <property type="project" value="UniProtKB"/>
</dbReference>
<dbReference type="FunFam" id="1.20.5.1160:FF:000001">
    <property type="entry name" value="Keratin type II"/>
    <property type="match status" value="1"/>
</dbReference>
<dbReference type="FunFam" id="1.20.5.170:FF:000004">
    <property type="entry name" value="Keratin, type II cytoskeletal 5"/>
    <property type="match status" value="1"/>
</dbReference>
<dbReference type="FunFam" id="1.20.5.500:FF:000001">
    <property type="entry name" value="Type II keratin 23"/>
    <property type="match status" value="1"/>
</dbReference>
<dbReference type="Gene3D" id="1.20.5.170">
    <property type="match status" value="1"/>
</dbReference>
<dbReference type="Gene3D" id="1.20.5.500">
    <property type="entry name" value="Single helix bin"/>
    <property type="match status" value="1"/>
</dbReference>
<dbReference type="Gene3D" id="1.20.5.1160">
    <property type="entry name" value="Vasodilator-stimulated phosphoprotein"/>
    <property type="match status" value="1"/>
</dbReference>
<dbReference type="InterPro" id="IPR018039">
    <property type="entry name" value="IF_conserved"/>
</dbReference>
<dbReference type="InterPro" id="IPR039008">
    <property type="entry name" value="IF_rod_dom"/>
</dbReference>
<dbReference type="InterPro" id="IPR032444">
    <property type="entry name" value="Keratin_2_head"/>
</dbReference>
<dbReference type="InterPro" id="IPR003054">
    <property type="entry name" value="Keratin_II"/>
</dbReference>
<dbReference type="PANTHER" id="PTHR45616">
    <property type="entry name" value="GATA-TYPE DOMAIN-CONTAINING PROTEIN"/>
    <property type="match status" value="1"/>
</dbReference>
<dbReference type="PANTHER" id="PTHR45616:SF32">
    <property type="entry name" value="KERATIN, TYPE II CYTOSKELETAL 5"/>
    <property type="match status" value="1"/>
</dbReference>
<dbReference type="Pfam" id="PF00038">
    <property type="entry name" value="Filament"/>
    <property type="match status" value="1"/>
</dbReference>
<dbReference type="Pfam" id="PF16208">
    <property type="entry name" value="Keratin_2_head"/>
    <property type="match status" value="1"/>
</dbReference>
<dbReference type="PRINTS" id="PR01276">
    <property type="entry name" value="TYPE2KERATIN"/>
</dbReference>
<dbReference type="SMART" id="SM01391">
    <property type="entry name" value="Filament"/>
    <property type="match status" value="1"/>
</dbReference>
<dbReference type="SUPFAM" id="SSF64593">
    <property type="entry name" value="Intermediate filament protein, coiled coil region"/>
    <property type="match status" value="3"/>
</dbReference>
<dbReference type="PROSITE" id="PS00226">
    <property type="entry name" value="IF_ROD_1"/>
    <property type="match status" value="1"/>
</dbReference>
<dbReference type="PROSITE" id="PS51842">
    <property type="entry name" value="IF_ROD_2"/>
    <property type="match status" value="1"/>
</dbReference>
<sequence length="601" mass="62937">MSRQSTVSFRSGGGRSFSTASAITPSVSRTSFTSVSRSGGGGGGGFGRVSLGGAYGAGGFGSRSLYNLGGSKRISISASGGGFRNRFGAGAGGGYGFGGGAGSGFGFGGGAGGGGFGLGGGAGFGGGFGGPGFPVCPPGGIQEVTVNQSLLTPLNLQIDPTIQRVRTEEREQIKTLNNKFASFIDKVRFLEQQNKVLDTKWALLQEQGTKTVRQNLEPLLEQYINNLRRQLDGIVGERGRLDSELRNMQDLVEDFKNKYEDEINKRTTAENEFVMLKKDVDAAYMNKVELEAKVDALMDEINFMKMFFDAELSQMQTHVSDTSVVLSMDNNRSLDLDSIIAEVKAQYEDIANRSRTEAESWYQTKYEELQQTAGRHGDDLRNTKHEISEMNRMIQRLRSEIDNVKKQCANLQNAIADAEQRGELALKDARSKLAELEDALQKAKQDMARLLREYQELMNTKLALDVEIATYRKLLEGEECRLSGEGVGPVNISVVTNTVSSGYGGGSGFGGGLGGGLGGGLGGGLGGGLGGGLGSGLGGGGSSSFYSSSSGGVGLGGGLSVGGSGFSASSGRSLGFGSGGGSSSSVKFVSTTSSSRKSFKS</sequence>
<feature type="chain" id="PRO_0000063726" description="Keratin, type II cytoskeletal 5">
    <location>
        <begin position="1"/>
        <end position="601"/>
    </location>
</feature>
<feature type="domain" description="IF rod" evidence="5">
    <location>
        <begin position="169"/>
        <end position="482"/>
    </location>
</feature>
<feature type="region of interest" description="Head" evidence="4">
    <location>
        <begin position="1"/>
        <end position="168"/>
    </location>
</feature>
<feature type="region of interest" description="Coil 1A" evidence="4">
    <location>
        <begin position="169"/>
        <end position="204"/>
    </location>
</feature>
<feature type="region of interest" description="Linker 1" evidence="4">
    <location>
        <begin position="205"/>
        <end position="223"/>
    </location>
</feature>
<feature type="region of interest" description="Coil 1B" evidence="4">
    <location>
        <begin position="224"/>
        <end position="316"/>
    </location>
</feature>
<feature type="region of interest" description="Linker 12" evidence="4">
    <location>
        <begin position="317"/>
        <end position="339"/>
    </location>
</feature>
<feature type="region of interest" description="Coil 2" evidence="4">
    <location>
        <begin position="340"/>
        <end position="478"/>
    </location>
</feature>
<feature type="region of interest" description="Tail" evidence="4">
    <location>
        <begin position="479"/>
        <end position="601"/>
    </location>
</feature>
<feature type="region of interest" description="Disordered" evidence="6">
    <location>
        <begin position="576"/>
        <end position="601"/>
    </location>
</feature>
<feature type="compositionally biased region" description="Low complexity" evidence="6">
    <location>
        <begin position="583"/>
        <end position="601"/>
    </location>
</feature>
<feature type="site" description="Stutter" evidence="4">
    <location>
        <position position="420"/>
    </location>
</feature>
<feature type="modified residue" description="Phosphoserine" evidence="2">
    <location>
        <position position="5"/>
    </location>
</feature>
<feature type="modified residue" description="Phosphoserine" evidence="2">
    <location>
        <position position="8"/>
    </location>
</feature>
<feature type="modified residue" description="Phosphoserine" evidence="3">
    <location>
        <position position="16"/>
    </location>
</feature>
<feature type="modified residue" description="Phosphoserine" evidence="3">
    <location>
        <position position="21"/>
    </location>
</feature>
<feature type="modified residue" description="Phosphothreonine; by CDK1" evidence="3">
    <location>
        <position position="24"/>
    </location>
</feature>
<feature type="modified residue" description="Phosphoserine" evidence="3">
    <location>
        <position position="26"/>
    </location>
</feature>
<feature type="modified residue" description="Phosphoserine" evidence="2">
    <location>
        <position position="36"/>
    </location>
</feature>
<feature type="modified residue" description="Phosphoserine" evidence="3">
    <location>
        <position position="50"/>
    </location>
</feature>
<feature type="modified residue" description="Phosphoserine" evidence="3">
    <location>
        <position position="64"/>
    </location>
</feature>
<feature type="modified residue" description="Phosphoserine" evidence="2">
    <location>
        <position position="71"/>
    </location>
</feature>
<feature type="modified residue" description="Phosphoserine" evidence="2">
    <location>
        <position position="75"/>
    </location>
</feature>
<feature type="modified residue" description="Phosphothreonine; by CDK1" evidence="3">
    <location>
        <position position="152"/>
    </location>
</feature>
<feature type="modified residue" description="Phosphothreonine; by AURKB" evidence="3">
    <location>
        <position position="167"/>
    </location>
</feature>
<feature type="sequence variant" description="In EBS." evidence="7">
    <original>E</original>
    <variation>K</variation>
    <location>
        <position position="478"/>
    </location>
</feature>
<keyword id="KW-0175">Coiled coil</keyword>
<keyword id="KW-0963">Cytoplasm</keyword>
<keyword id="KW-0225">Disease variant</keyword>
<keyword id="KW-0403">Intermediate filament</keyword>
<keyword id="KW-0416">Keratin</keyword>
<keyword id="KW-0597">Phosphoprotein</keyword>
<keyword id="KW-1185">Reference proteome</keyword>
<evidence type="ECO:0000250" key="1">
    <source>
        <dbReference type="UniProtKB" id="P13647"/>
    </source>
</evidence>
<evidence type="ECO:0000250" key="2">
    <source>
        <dbReference type="UniProtKB" id="Q6P6Q2"/>
    </source>
</evidence>
<evidence type="ECO:0000250" key="3">
    <source>
        <dbReference type="UniProtKB" id="Q922U2"/>
    </source>
</evidence>
<evidence type="ECO:0000255" key="4"/>
<evidence type="ECO:0000255" key="5">
    <source>
        <dbReference type="PROSITE-ProRule" id="PRU01188"/>
    </source>
</evidence>
<evidence type="ECO:0000256" key="6">
    <source>
        <dbReference type="SAM" id="MobiDB-lite"/>
    </source>
</evidence>
<evidence type="ECO:0000269" key="7">
    <source>
    </source>
</evidence>
<evidence type="ECO:0000305" key="8"/>
<evidence type="ECO:0000312" key="9">
    <source>
        <dbReference type="EMBL" id="AAU95600.1"/>
    </source>
</evidence>
<accession>Q5XQN5</accession>
<name>K2C5_BOVIN</name>
<protein>
    <recommendedName>
        <fullName>Keratin, type II cytoskeletal 5</fullName>
    </recommendedName>
    <alternativeName>
        <fullName>Cytokeratin-5</fullName>
        <shortName>CK-5</shortName>
    </alternativeName>
    <alternativeName>
        <fullName>Keratin-5</fullName>
        <shortName>K5</shortName>
    </alternativeName>
    <alternativeName>
        <fullName>Type-II keratin Kb5</fullName>
    </alternativeName>
</protein>
<gene>
    <name evidence="1" type="primary">KRT5</name>
</gene>
<organism>
    <name type="scientific">Bos taurus</name>
    <name type="common">Bovine</name>
    <dbReference type="NCBI Taxonomy" id="9913"/>
    <lineage>
        <taxon>Eukaryota</taxon>
        <taxon>Metazoa</taxon>
        <taxon>Chordata</taxon>
        <taxon>Craniata</taxon>
        <taxon>Vertebrata</taxon>
        <taxon>Euteleostomi</taxon>
        <taxon>Mammalia</taxon>
        <taxon>Eutheria</taxon>
        <taxon>Laurasiatheria</taxon>
        <taxon>Artiodactyla</taxon>
        <taxon>Ruminantia</taxon>
        <taxon>Pecora</taxon>
        <taxon>Bovidae</taxon>
        <taxon>Bovinae</taxon>
        <taxon>Bos</taxon>
    </lineage>
</organism>
<comment type="function">
    <text evidence="3">Required for the formation of keratin intermediate filaments in the basal epidermis and maintenance of the skin barrier in response to mechanical stress (By similarity). Regulates the recruitment of Langerhans cells to the epidermis, potentially by modulation of the abundance of macrophage chemotactic cytokines, macrophage inflammatory cytokines and CTNND1 localization in keratinocytes (By similarity).</text>
</comment>
<comment type="subunit">
    <text evidence="1 3">Heterodimer of a type I and a type II keratin. Heterodimer with type I keratin KRT25 leading to the formation of keratin intermediate filament (KIF) network (By similarity). Forms a heterodimer (via 2B domains) with KRT14 (via 2B domains) (By similarity). Interacts with TCHP (By similarity). Interacts with EPPK1 (By similarity). Interacts with AMELX (By similarity). Interacts with PKP1 (via N-terminus) and PKP2 (By similarity).</text>
</comment>
<comment type="subcellular location">
    <subcellularLocation>
        <location evidence="3">Cytoplasm</location>
    </subcellularLocation>
</comment>
<comment type="PTM">
    <text evidence="3">Phosphorylated by CDK1, AURKB and Rho-kinase, phosphorylation is regulated by the cell cycle (By similarity). Thr-24 phosphorylation, mediated by CDK1, peaks during prometaphase or metaphase cells with phosphorylated filamentous structures evident throughout the cytoplasm early mitosis (By similarity). CDK1 phosphorylates Thr-24 in mitotic cells at the site of injury (By similarity).</text>
</comment>
<comment type="PTM">
    <text evidence="3">O-glycosylated.</text>
</comment>
<comment type="disease">
    <text>Defects in KRT5 are a cause of epidermolysis bullosa simplex [EBS]. EBS leads to loss of skin and mucosa from contact areas and inflammation, due to separation of the epidermis from the dermis.</text>
</comment>
<comment type="miscellaneous">
    <text>There are two types of cytoskeletal and microfibrillar keratin: I (acidic; 40-55 kDa) and II (neutral to basic; 56-70 kDa).</text>
</comment>
<comment type="similarity">
    <text evidence="5">Belongs to the intermediate filament family.</text>
</comment>
<reference evidence="8 9" key="1">
    <citation type="journal article" date="2005" name="J. Invest. Dermatol.">
        <title>A mutation in bovine keratin 5 causing epidermolysis bullosa simplex, transmitted by a mosaic sire.</title>
        <authorList>
            <person name="Ford C.A."/>
            <person name="Stanfield A.M."/>
            <person name="Spelman R.J."/>
            <person name="Smits B."/>
            <person name="Ankersmidt-Udy A.E."/>
            <person name="Cottier K."/>
            <person name="Holloway H."/>
            <person name="Walden A."/>
            <person name="Al-Wahb M."/>
            <person name="Bohm E."/>
            <person name="Snell R.G."/>
            <person name="Sutherland G.T."/>
        </authorList>
    </citation>
    <scope>NUCLEOTIDE SEQUENCE [GENOMIC DNA]</scope>
    <scope>VARIANT EBS LYS-478</scope>
    <source>
        <strain evidence="7">Friesian X Jersey</strain>
    </source>
</reference>